<comment type="similarity">
    <text evidence="1">Belongs to the bacterial ribosomal protein bL34 family.</text>
</comment>
<keyword id="KW-0687">Ribonucleoprotein</keyword>
<keyword id="KW-0689">Ribosomal protein</keyword>
<evidence type="ECO:0000255" key="1">
    <source>
        <dbReference type="HAMAP-Rule" id="MF_00391"/>
    </source>
</evidence>
<evidence type="ECO:0000256" key="2">
    <source>
        <dbReference type="SAM" id="MobiDB-lite"/>
    </source>
</evidence>
<evidence type="ECO:0000305" key="3"/>
<sequence>MKRTYQPSKRKRKKVHGFRTRMSTKNGRRVLASRRRKGRKVLSA</sequence>
<dbReference type="EMBL" id="CP001175">
    <property type="protein sequence ID" value="ACK41000.1"/>
    <property type="molecule type" value="Genomic_DNA"/>
</dbReference>
<dbReference type="RefSeq" id="WP_003718062.1">
    <property type="nucleotide sequence ID" value="NC_011660.1"/>
</dbReference>
<dbReference type="SMR" id="B8DAR1"/>
<dbReference type="GeneID" id="93240767"/>
<dbReference type="KEGG" id="lmh:LMHCC_2665"/>
<dbReference type="HOGENOM" id="CLU_129938_2_0_9"/>
<dbReference type="GO" id="GO:1990904">
    <property type="term" value="C:ribonucleoprotein complex"/>
    <property type="evidence" value="ECO:0007669"/>
    <property type="project" value="UniProtKB-KW"/>
</dbReference>
<dbReference type="GO" id="GO:0005840">
    <property type="term" value="C:ribosome"/>
    <property type="evidence" value="ECO:0007669"/>
    <property type="project" value="UniProtKB-KW"/>
</dbReference>
<dbReference type="GO" id="GO:0003735">
    <property type="term" value="F:structural constituent of ribosome"/>
    <property type="evidence" value="ECO:0007669"/>
    <property type="project" value="InterPro"/>
</dbReference>
<dbReference type="GO" id="GO:0006412">
    <property type="term" value="P:translation"/>
    <property type="evidence" value="ECO:0007669"/>
    <property type="project" value="UniProtKB-UniRule"/>
</dbReference>
<dbReference type="FunFam" id="1.10.287.3980:FF:000001">
    <property type="entry name" value="Mitochondrial ribosomal protein L34"/>
    <property type="match status" value="1"/>
</dbReference>
<dbReference type="Gene3D" id="1.10.287.3980">
    <property type="match status" value="1"/>
</dbReference>
<dbReference type="HAMAP" id="MF_00391">
    <property type="entry name" value="Ribosomal_bL34"/>
    <property type="match status" value="1"/>
</dbReference>
<dbReference type="InterPro" id="IPR000271">
    <property type="entry name" value="Ribosomal_bL34"/>
</dbReference>
<dbReference type="InterPro" id="IPR020939">
    <property type="entry name" value="Ribosomal_bL34_CS"/>
</dbReference>
<dbReference type="NCBIfam" id="TIGR01030">
    <property type="entry name" value="rpmH_bact"/>
    <property type="match status" value="1"/>
</dbReference>
<dbReference type="PANTHER" id="PTHR14503:SF4">
    <property type="entry name" value="LARGE RIBOSOMAL SUBUNIT PROTEIN BL34M"/>
    <property type="match status" value="1"/>
</dbReference>
<dbReference type="PANTHER" id="PTHR14503">
    <property type="entry name" value="MITOCHONDRIAL RIBOSOMAL PROTEIN 34 FAMILY MEMBER"/>
    <property type="match status" value="1"/>
</dbReference>
<dbReference type="Pfam" id="PF00468">
    <property type="entry name" value="Ribosomal_L34"/>
    <property type="match status" value="1"/>
</dbReference>
<dbReference type="PROSITE" id="PS00784">
    <property type="entry name" value="RIBOSOMAL_L34"/>
    <property type="match status" value="1"/>
</dbReference>
<feature type="chain" id="PRO_1000134447" description="Large ribosomal subunit protein bL34">
    <location>
        <begin position="1"/>
        <end position="44"/>
    </location>
</feature>
<feature type="region of interest" description="Disordered" evidence="2">
    <location>
        <begin position="1"/>
        <end position="44"/>
    </location>
</feature>
<feature type="compositionally biased region" description="Basic residues" evidence="2">
    <location>
        <begin position="1"/>
        <end position="19"/>
    </location>
</feature>
<feature type="compositionally biased region" description="Basic residues" evidence="2">
    <location>
        <begin position="26"/>
        <end position="44"/>
    </location>
</feature>
<gene>
    <name evidence="1" type="primary">rpmH</name>
    <name type="ordered locus">LMHCC_2665</name>
</gene>
<organism>
    <name type="scientific">Listeria monocytogenes serotype 4a (strain HCC23)</name>
    <dbReference type="NCBI Taxonomy" id="552536"/>
    <lineage>
        <taxon>Bacteria</taxon>
        <taxon>Bacillati</taxon>
        <taxon>Bacillota</taxon>
        <taxon>Bacilli</taxon>
        <taxon>Bacillales</taxon>
        <taxon>Listeriaceae</taxon>
        <taxon>Listeria</taxon>
    </lineage>
</organism>
<proteinExistence type="inferred from homology"/>
<name>RL34_LISMH</name>
<reference key="1">
    <citation type="journal article" date="2011" name="J. Bacteriol.">
        <title>Genome sequence of lineage III Listeria monocytogenes strain HCC23.</title>
        <authorList>
            <person name="Steele C.L."/>
            <person name="Donaldson J.R."/>
            <person name="Paul D."/>
            <person name="Banes M.M."/>
            <person name="Arick T."/>
            <person name="Bridges S.M."/>
            <person name="Lawrence M.L."/>
        </authorList>
    </citation>
    <scope>NUCLEOTIDE SEQUENCE [LARGE SCALE GENOMIC DNA]</scope>
    <source>
        <strain>HCC23</strain>
    </source>
</reference>
<accession>B8DAR1</accession>
<protein>
    <recommendedName>
        <fullName evidence="1">Large ribosomal subunit protein bL34</fullName>
    </recommendedName>
    <alternativeName>
        <fullName evidence="3">50S ribosomal protein L34</fullName>
    </alternativeName>
</protein>